<proteinExistence type="inferred from homology"/>
<comment type="function">
    <text evidence="1">Necessary for efficient RNA polymerase transcription elongation past template-encoded arresting sites. The arresting sites in DNA have the property of trapping a certain fraction of elongating RNA polymerases that pass through, resulting in locked ternary complexes. Cleavage of the nascent transcript by cleavage factors such as GreA or GreB allows the resumption of elongation from the new 3'terminus. GreA releases sequences of 2 to 3 nucleotides.</text>
</comment>
<comment type="similarity">
    <text evidence="1">Belongs to the GreA/GreB family.</text>
</comment>
<feature type="chain" id="PRO_1000075874" description="Transcription elongation factor GreA">
    <location>
        <begin position="1"/>
        <end position="157"/>
    </location>
</feature>
<sequence>MERIPMTAEGHAALQAELKVLKSVERPSIIAAISEARSHGDLSENAEYHAAKEKQSFIEGRISELDDKLARADVIDVSKLGGSKVRFGATVTIADVDTEDEQTYKIVGEDEADVKQGKISVTSPIARALIGKEEGDEAEVAAPAGARAYEVIKVVYK</sequence>
<accession>Q0C4H1</accession>
<dbReference type="EMBL" id="CP000158">
    <property type="protein sequence ID" value="ABI77403.1"/>
    <property type="molecule type" value="Genomic_DNA"/>
</dbReference>
<dbReference type="RefSeq" id="WP_011645672.1">
    <property type="nucleotide sequence ID" value="NC_008358.1"/>
</dbReference>
<dbReference type="SMR" id="Q0C4H1"/>
<dbReference type="STRING" id="228405.HNE_0643"/>
<dbReference type="KEGG" id="hne:HNE_0643"/>
<dbReference type="eggNOG" id="COG0782">
    <property type="taxonomic scope" value="Bacteria"/>
</dbReference>
<dbReference type="HOGENOM" id="CLU_101379_2_0_5"/>
<dbReference type="Proteomes" id="UP000001959">
    <property type="component" value="Chromosome"/>
</dbReference>
<dbReference type="GO" id="GO:0003677">
    <property type="term" value="F:DNA binding"/>
    <property type="evidence" value="ECO:0007669"/>
    <property type="project" value="UniProtKB-UniRule"/>
</dbReference>
<dbReference type="GO" id="GO:0070063">
    <property type="term" value="F:RNA polymerase binding"/>
    <property type="evidence" value="ECO:0007669"/>
    <property type="project" value="InterPro"/>
</dbReference>
<dbReference type="GO" id="GO:0006354">
    <property type="term" value="P:DNA-templated transcription elongation"/>
    <property type="evidence" value="ECO:0007669"/>
    <property type="project" value="TreeGrafter"/>
</dbReference>
<dbReference type="GO" id="GO:0032784">
    <property type="term" value="P:regulation of DNA-templated transcription elongation"/>
    <property type="evidence" value="ECO:0007669"/>
    <property type="project" value="UniProtKB-UniRule"/>
</dbReference>
<dbReference type="FunFam" id="1.10.287.180:FF:000001">
    <property type="entry name" value="Transcription elongation factor GreA"/>
    <property type="match status" value="1"/>
</dbReference>
<dbReference type="FunFam" id="3.10.50.30:FF:000001">
    <property type="entry name" value="Transcription elongation factor GreA"/>
    <property type="match status" value="1"/>
</dbReference>
<dbReference type="Gene3D" id="3.10.50.30">
    <property type="entry name" value="Transcription elongation factor, GreA/GreB, C-terminal domain"/>
    <property type="match status" value="1"/>
</dbReference>
<dbReference type="Gene3D" id="1.10.287.180">
    <property type="entry name" value="Transcription elongation factor, GreA/GreB, N-terminal domain"/>
    <property type="match status" value="1"/>
</dbReference>
<dbReference type="HAMAP" id="MF_00105">
    <property type="entry name" value="GreA_GreB"/>
    <property type="match status" value="1"/>
</dbReference>
<dbReference type="InterPro" id="IPR036953">
    <property type="entry name" value="GreA/GreB_C_sf"/>
</dbReference>
<dbReference type="InterPro" id="IPR018151">
    <property type="entry name" value="TF_GreA/GreB_CS"/>
</dbReference>
<dbReference type="InterPro" id="IPR006359">
    <property type="entry name" value="Tscrpt_elong_fac_GreA"/>
</dbReference>
<dbReference type="InterPro" id="IPR028624">
    <property type="entry name" value="Tscrpt_elong_fac_GreA/B"/>
</dbReference>
<dbReference type="InterPro" id="IPR001437">
    <property type="entry name" value="Tscrpt_elong_fac_GreA/B_C"/>
</dbReference>
<dbReference type="InterPro" id="IPR023459">
    <property type="entry name" value="Tscrpt_elong_fac_GreA/B_fam"/>
</dbReference>
<dbReference type="InterPro" id="IPR022691">
    <property type="entry name" value="Tscrpt_elong_fac_GreA/B_N"/>
</dbReference>
<dbReference type="InterPro" id="IPR036805">
    <property type="entry name" value="Tscrpt_elong_fac_GreA/B_N_sf"/>
</dbReference>
<dbReference type="NCBIfam" id="TIGR01462">
    <property type="entry name" value="greA"/>
    <property type="match status" value="1"/>
</dbReference>
<dbReference type="NCBIfam" id="NF001261">
    <property type="entry name" value="PRK00226.1-2"/>
    <property type="match status" value="1"/>
</dbReference>
<dbReference type="NCBIfam" id="NF001263">
    <property type="entry name" value="PRK00226.1-4"/>
    <property type="match status" value="1"/>
</dbReference>
<dbReference type="NCBIfam" id="NF001264">
    <property type="entry name" value="PRK00226.1-5"/>
    <property type="match status" value="1"/>
</dbReference>
<dbReference type="PANTHER" id="PTHR30437">
    <property type="entry name" value="TRANSCRIPTION ELONGATION FACTOR GREA"/>
    <property type="match status" value="1"/>
</dbReference>
<dbReference type="PANTHER" id="PTHR30437:SF4">
    <property type="entry name" value="TRANSCRIPTION ELONGATION FACTOR GREA"/>
    <property type="match status" value="1"/>
</dbReference>
<dbReference type="Pfam" id="PF01272">
    <property type="entry name" value="GreA_GreB"/>
    <property type="match status" value="1"/>
</dbReference>
<dbReference type="Pfam" id="PF03449">
    <property type="entry name" value="GreA_GreB_N"/>
    <property type="match status" value="1"/>
</dbReference>
<dbReference type="PIRSF" id="PIRSF006092">
    <property type="entry name" value="GreA_GreB"/>
    <property type="match status" value="1"/>
</dbReference>
<dbReference type="SUPFAM" id="SSF54534">
    <property type="entry name" value="FKBP-like"/>
    <property type="match status" value="1"/>
</dbReference>
<dbReference type="SUPFAM" id="SSF46557">
    <property type="entry name" value="GreA transcript cleavage protein, N-terminal domain"/>
    <property type="match status" value="1"/>
</dbReference>
<dbReference type="PROSITE" id="PS00829">
    <property type="entry name" value="GREAB_1"/>
    <property type="match status" value="1"/>
</dbReference>
<dbReference type="PROSITE" id="PS00830">
    <property type="entry name" value="GREAB_2"/>
    <property type="match status" value="1"/>
</dbReference>
<gene>
    <name evidence="1" type="primary">greA</name>
    <name type="ordered locus">HNE_0643</name>
</gene>
<name>GREA_HYPNA</name>
<protein>
    <recommendedName>
        <fullName evidence="1">Transcription elongation factor GreA</fullName>
    </recommendedName>
    <alternativeName>
        <fullName evidence="1">Transcript cleavage factor GreA</fullName>
    </alternativeName>
</protein>
<keyword id="KW-0238">DNA-binding</keyword>
<keyword id="KW-1185">Reference proteome</keyword>
<keyword id="KW-0804">Transcription</keyword>
<keyword id="KW-0805">Transcription regulation</keyword>
<reference key="1">
    <citation type="journal article" date="2006" name="J. Bacteriol.">
        <title>Comparative genomic evidence for a close relationship between the dimorphic prosthecate bacteria Hyphomonas neptunium and Caulobacter crescentus.</title>
        <authorList>
            <person name="Badger J.H."/>
            <person name="Hoover T.R."/>
            <person name="Brun Y.V."/>
            <person name="Weiner R.M."/>
            <person name="Laub M.T."/>
            <person name="Alexandre G."/>
            <person name="Mrazek J."/>
            <person name="Ren Q."/>
            <person name="Paulsen I.T."/>
            <person name="Nelson K.E."/>
            <person name="Khouri H.M."/>
            <person name="Radune D."/>
            <person name="Sosa J."/>
            <person name="Dodson R.J."/>
            <person name="Sullivan S.A."/>
            <person name="Rosovitz M.J."/>
            <person name="Madupu R."/>
            <person name="Brinkac L.M."/>
            <person name="Durkin A.S."/>
            <person name="Daugherty S.C."/>
            <person name="Kothari S.P."/>
            <person name="Giglio M.G."/>
            <person name="Zhou L."/>
            <person name="Haft D.H."/>
            <person name="Selengut J.D."/>
            <person name="Davidsen T.M."/>
            <person name="Yang Q."/>
            <person name="Zafar N."/>
            <person name="Ward N.L."/>
        </authorList>
    </citation>
    <scope>NUCLEOTIDE SEQUENCE [LARGE SCALE GENOMIC DNA]</scope>
    <source>
        <strain>ATCC 15444</strain>
    </source>
</reference>
<evidence type="ECO:0000255" key="1">
    <source>
        <dbReference type="HAMAP-Rule" id="MF_00105"/>
    </source>
</evidence>
<organism>
    <name type="scientific">Hyphomonas neptunium (strain ATCC 15444)</name>
    <dbReference type="NCBI Taxonomy" id="228405"/>
    <lineage>
        <taxon>Bacteria</taxon>
        <taxon>Pseudomonadati</taxon>
        <taxon>Pseudomonadota</taxon>
        <taxon>Alphaproteobacteria</taxon>
        <taxon>Hyphomonadales</taxon>
        <taxon>Hyphomonadaceae</taxon>
        <taxon>Hyphomonas</taxon>
    </lineage>
</organism>